<feature type="signal peptide" evidence="1">
    <location>
        <begin position="1"/>
        <end position="23"/>
    </location>
</feature>
<feature type="chain" id="PRO_0000285735" description="Leu/Ile/Val-binding protein homolog 3">
    <location>
        <begin position="24"/>
        <end position="368"/>
    </location>
</feature>
<feature type="strand" evidence="3">
    <location>
        <begin position="25"/>
        <end position="31"/>
    </location>
</feature>
<feature type="helix" evidence="3">
    <location>
        <begin position="38"/>
        <end position="57"/>
    </location>
</feature>
<feature type="turn" evidence="3">
    <location>
        <begin position="58"/>
        <end position="60"/>
    </location>
</feature>
<feature type="strand" evidence="3">
    <location>
        <begin position="66"/>
        <end position="72"/>
    </location>
</feature>
<feature type="helix" evidence="3">
    <location>
        <begin position="77"/>
        <end position="89"/>
    </location>
</feature>
<feature type="strand" evidence="3">
    <location>
        <begin position="94"/>
        <end position="97"/>
    </location>
</feature>
<feature type="helix" evidence="3">
    <location>
        <begin position="101"/>
        <end position="113"/>
    </location>
</feature>
<feature type="strand" evidence="3">
    <location>
        <begin position="117"/>
        <end position="122"/>
    </location>
</feature>
<feature type="helix" evidence="3">
    <location>
        <begin position="126"/>
        <end position="129"/>
    </location>
</feature>
<feature type="strand" evidence="3">
    <location>
        <begin position="134"/>
        <end position="140"/>
    </location>
</feature>
<feature type="helix" evidence="3">
    <location>
        <begin position="143"/>
        <end position="157"/>
    </location>
</feature>
<feature type="strand" evidence="3">
    <location>
        <begin position="163"/>
        <end position="167"/>
    </location>
</feature>
<feature type="helix" evidence="3">
    <location>
        <begin position="171"/>
        <end position="186"/>
    </location>
</feature>
<feature type="strand" evidence="3">
    <location>
        <begin position="192"/>
        <end position="196"/>
    </location>
</feature>
<feature type="helix" evidence="3">
    <location>
        <begin position="205"/>
        <end position="214"/>
    </location>
</feature>
<feature type="strand" evidence="3">
    <location>
        <begin position="217"/>
        <end position="223"/>
    </location>
</feature>
<feature type="helix" evidence="3">
    <location>
        <begin position="225"/>
        <end position="237"/>
    </location>
</feature>
<feature type="strand" evidence="3">
    <location>
        <begin position="243"/>
        <end position="246"/>
    </location>
</feature>
<feature type="helix" evidence="3">
    <location>
        <begin position="248"/>
        <end position="250"/>
    </location>
</feature>
<feature type="helix" evidence="3">
    <location>
        <begin position="253"/>
        <end position="259"/>
    </location>
</feature>
<feature type="helix" evidence="3">
    <location>
        <begin position="260"/>
        <end position="263"/>
    </location>
</feature>
<feature type="strand" evidence="3">
    <location>
        <begin position="267"/>
        <end position="271"/>
    </location>
</feature>
<feature type="helix" evidence="3">
    <location>
        <begin position="274"/>
        <end position="276"/>
    </location>
</feature>
<feature type="helix" evidence="3">
    <location>
        <begin position="278"/>
        <end position="280"/>
    </location>
</feature>
<feature type="helix" evidence="3">
    <location>
        <begin position="281"/>
        <end position="288"/>
    </location>
</feature>
<feature type="turn" evidence="3">
    <location>
        <begin position="289"/>
        <end position="291"/>
    </location>
</feature>
<feature type="helix" evidence="3">
    <location>
        <begin position="296"/>
        <end position="315"/>
    </location>
</feature>
<feature type="helix" evidence="3">
    <location>
        <begin position="321"/>
        <end position="328"/>
    </location>
</feature>
<feature type="strand" evidence="3">
    <location>
        <begin position="334"/>
        <end position="336"/>
    </location>
</feature>
<feature type="strand" evidence="3">
    <location>
        <begin position="339"/>
        <end position="341"/>
    </location>
</feature>
<feature type="strand" evidence="3">
    <location>
        <begin position="349"/>
        <end position="351"/>
    </location>
</feature>
<feature type="strand" evidence="3">
    <location>
        <begin position="354"/>
        <end position="360"/>
    </location>
</feature>
<feature type="strand" evidence="3">
    <location>
        <begin position="363"/>
        <end position="366"/>
    </location>
</feature>
<protein>
    <recommendedName>
        <fullName>Leu/Ile/Val-binding protein homolog 3</fullName>
    </recommendedName>
</protein>
<evidence type="ECO:0000255" key="1"/>
<evidence type="ECO:0000305" key="2"/>
<evidence type="ECO:0007829" key="3">
    <source>
        <dbReference type="PDB" id="4N0Q"/>
    </source>
</evidence>
<reference key="1">
    <citation type="journal article" date="2002" name="Proc. Natl. Acad. Sci. U.S.A.">
        <title>The genome sequence of the facultative intracellular pathogen Brucella melitensis.</title>
        <authorList>
            <person name="DelVecchio V.G."/>
            <person name="Kapatral V."/>
            <person name="Redkar R.J."/>
            <person name="Patra G."/>
            <person name="Mujer C."/>
            <person name="Los T."/>
            <person name="Ivanova N."/>
            <person name="Anderson I."/>
            <person name="Bhattacharyya A."/>
            <person name="Lykidis A."/>
            <person name="Reznik G."/>
            <person name="Jablonski L."/>
            <person name="Larsen N."/>
            <person name="D'Souza M."/>
            <person name="Bernal A."/>
            <person name="Mazur M."/>
            <person name="Goltsman E."/>
            <person name="Selkov E."/>
            <person name="Elzer P.H."/>
            <person name="Hagius S."/>
            <person name="O'Callaghan D."/>
            <person name="Letesson J.-J."/>
            <person name="Haselkorn R."/>
            <person name="Kyrpides N.C."/>
            <person name="Overbeek R."/>
        </authorList>
    </citation>
    <scope>NUCLEOTIDE SEQUENCE [LARGE SCALE GENOMIC DNA]</scope>
    <source>
        <strain>ATCC 23456 / CCUG 17765 / NCTC 10094 / 16M</strain>
    </source>
</reference>
<sequence length="368" mass="37884">MNLKLLSSVAFAATIGFASAAYADITIGVIAPLTGPVAAFGDQVKKGAETAVEVINKAGGIKGEKVVLKFADDAGEPKQGVSAANQIVGDGIKFVVGLVTTGVAVPVSDVLSENGVLMVTPTATGPDLTARGLENVFRTCGRDGQQAEVMADYVLKNMKDKKVAVIHDKGAYGKGLADAFKAAINKGGITEVHYDSVTPGDKDFSALVTKLKSAGAEVVYFGGYHAEGGLLSRQLHDAGMQALVLGGEGLSNTEYWAIGGTNAQGTLFTNAKDATKNPAAKDAIQALKAKNIPAEAFTMNAYAAVEVIKAGIERAGSTDDSAAVAKALHDGKPIETAIGTLTYSETGDLSSPSFDIFKWDDGKIVGLE</sequence>
<comment type="function">
    <text evidence="2">Component of an amino-acid transport system.</text>
</comment>
<comment type="similarity">
    <text evidence="2">Belongs to the leucine-binding protein family.</text>
</comment>
<keyword id="KW-0002">3D-structure</keyword>
<keyword id="KW-0029">Amino-acid transport</keyword>
<keyword id="KW-0732">Signal</keyword>
<keyword id="KW-0813">Transport</keyword>
<dbReference type="EMBL" id="AE008917">
    <property type="protein sequence ID" value="AAL53111.1"/>
    <property type="molecule type" value="Genomic_DNA"/>
</dbReference>
<dbReference type="PIR" id="AD3493">
    <property type="entry name" value="AD3493"/>
</dbReference>
<dbReference type="RefSeq" id="WP_004684599.1">
    <property type="nucleotide sequence ID" value="NZ_GG703778.1"/>
</dbReference>
<dbReference type="PDB" id="4N0Q">
    <property type="method" value="X-ray"/>
    <property type="resolution" value="2.30 A"/>
    <property type="chains" value="A/B/C/D=23-368"/>
</dbReference>
<dbReference type="PDBsum" id="4N0Q"/>
<dbReference type="SMR" id="Q8YEE8"/>
<dbReference type="GeneID" id="29594810"/>
<dbReference type="KEGG" id="bme:BMEI1930"/>
<dbReference type="KEGG" id="bmel:DK63_1559"/>
<dbReference type="PATRIC" id="fig|224914.52.peg.1645"/>
<dbReference type="eggNOG" id="COG0683">
    <property type="taxonomic scope" value="Bacteria"/>
</dbReference>
<dbReference type="PhylomeDB" id="Q8YEE8"/>
<dbReference type="EvolutionaryTrace" id="Q8YEE8"/>
<dbReference type="Proteomes" id="UP000000419">
    <property type="component" value="Chromosome I"/>
</dbReference>
<dbReference type="GO" id="GO:0006865">
    <property type="term" value="P:amino acid transport"/>
    <property type="evidence" value="ECO:0007669"/>
    <property type="project" value="UniProtKB-KW"/>
</dbReference>
<dbReference type="CDD" id="cd06342">
    <property type="entry name" value="PBP1_ABC_LIVBP-like"/>
    <property type="match status" value="1"/>
</dbReference>
<dbReference type="Gene3D" id="3.40.50.2300">
    <property type="match status" value="2"/>
</dbReference>
<dbReference type="InterPro" id="IPR028081">
    <property type="entry name" value="Leu-bd"/>
</dbReference>
<dbReference type="InterPro" id="IPR000709">
    <property type="entry name" value="Leu_Ile_Val-bd"/>
</dbReference>
<dbReference type="InterPro" id="IPR028082">
    <property type="entry name" value="Peripla_BP_I"/>
</dbReference>
<dbReference type="PANTHER" id="PTHR47151:SF2">
    <property type="entry name" value="AMINO ACID BINDING PROTEIN"/>
    <property type="match status" value="1"/>
</dbReference>
<dbReference type="PANTHER" id="PTHR47151">
    <property type="entry name" value="LEU/ILE/VAL-BINDING ABC TRANSPORTER SUBUNIT"/>
    <property type="match status" value="1"/>
</dbReference>
<dbReference type="Pfam" id="PF13458">
    <property type="entry name" value="Peripla_BP_6"/>
    <property type="match status" value="1"/>
</dbReference>
<dbReference type="PRINTS" id="PR00337">
    <property type="entry name" value="LEUILEVALBP"/>
</dbReference>
<dbReference type="SUPFAM" id="SSF53822">
    <property type="entry name" value="Periplasmic binding protein-like I"/>
    <property type="match status" value="1"/>
</dbReference>
<proteinExistence type="evidence at protein level"/>
<accession>Q8YEE8</accession>
<gene>
    <name type="ordered locus">BMEI1930</name>
</gene>
<organism>
    <name type="scientific">Brucella melitensis biotype 1 (strain ATCC 23456 / CCUG 17765 / NCTC 10094 / 16M)</name>
    <dbReference type="NCBI Taxonomy" id="224914"/>
    <lineage>
        <taxon>Bacteria</taxon>
        <taxon>Pseudomonadati</taxon>
        <taxon>Pseudomonadota</taxon>
        <taxon>Alphaproteobacteria</taxon>
        <taxon>Hyphomicrobiales</taxon>
        <taxon>Brucellaceae</taxon>
        <taxon>Brucella/Ochrobactrum group</taxon>
        <taxon>Brucella</taxon>
    </lineage>
</organism>
<name>LIVB3_BRUME</name>